<organism>
    <name type="scientific">Hordeum vulgare</name>
    <name type="common">Barley</name>
    <dbReference type="NCBI Taxonomy" id="4513"/>
    <lineage>
        <taxon>Eukaryota</taxon>
        <taxon>Viridiplantae</taxon>
        <taxon>Streptophyta</taxon>
        <taxon>Embryophyta</taxon>
        <taxon>Tracheophyta</taxon>
        <taxon>Spermatophyta</taxon>
        <taxon>Magnoliopsida</taxon>
        <taxon>Liliopsida</taxon>
        <taxon>Poales</taxon>
        <taxon>Poaceae</taxon>
        <taxon>BOP clade</taxon>
        <taxon>Pooideae</taxon>
        <taxon>Triticodae</taxon>
        <taxon>Triticeae</taxon>
        <taxon>Hordeinae</taxon>
        <taxon>Hordeum</taxon>
    </lineage>
</organism>
<keyword id="KW-0328">Glycosyltransferase</keyword>
<keyword id="KW-0808">Transferase</keyword>
<dbReference type="EC" id="2.4.1.13"/>
<dbReference type="EMBL" id="X65871">
    <property type="protein sequence ID" value="CAA46701.1"/>
    <property type="molecule type" value="mRNA"/>
</dbReference>
<dbReference type="EMBL" id="X66728">
    <property type="protein sequence ID" value="CAA47264.1"/>
    <property type="molecule type" value="mRNA"/>
</dbReference>
<dbReference type="PIR" id="S29242">
    <property type="entry name" value="S29242"/>
</dbReference>
<dbReference type="SMR" id="P31922"/>
<dbReference type="CAZy" id="GT4">
    <property type="family name" value="Glycosyltransferase Family 4"/>
</dbReference>
<dbReference type="BRENDA" id="2.4.1.13">
    <property type="organism ID" value="2687"/>
</dbReference>
<dbReference type="SABIO-RK" id="P31922"/>
<dbReference type="ExpressionAtlas" id="P31922">
    <property type="expression patterns" value="baseline and differential"/>
</dbReference>
<dbReference type="GO" id="GO:0016157">
    <property type="term" value="F:sucrose synthase activity"/>
    <property type="evidence" value="ECO:0007669"/>
    <property type="project" value="UniProtKB-EC"/>
</dbReference>
<dbReference type="GO" id="GO:0005985">
    <property type="term" value="P:sucrose metabolic process"/>
    <property type="evidence" value="ECO:0007669"/>
    <property type="project" value="InterPro"/>
</dbReference>
<dbReference type="FunFam" id="1.20.120.1230:FF:000001">
    <property type="entry name" value="Sucrose synthase"/>
    <property type="match status" value="1"/>
</dbReference>
<dbReference type="FunFam" id="3.10.450.330:FF:000001">
    <property type="entry name" value="Sucrose synthase"/>
    <property type="match status" value="1"/>
</dbReference>
<dbReference type="FunFam" id="3.40.50.2000:FF:000006">
    <property type="entry name" value="Sucrose synthase"/>
    <property type="match status" value="1"/>
</dbReference>
<dbReference type="Gene3D" id="1.20.120.1230">
    <property type="match status" value="1"/>
</dbReference>
<dbReference type="Gene3D" id="3.10.450.330">
    <property type="match status" value="1"/>
</dbReference>
<dbReference type="Gene3D" id="3.40.50.2000">
    <property type="entry name" value="Glycogen Phosphorylase B"/>
    <property type="match status" value="2"/>
</dbReference>
<dbReference type="InterPro" id="IPR001296">
    <property type="entry name" value="Glyco_trans_1"/>
</dbReference>
<dbReference type="InterPro" id="IPR000368">
    <property type="entry name" value="Sucrose_synth_GT-B1"/>
</dbReference>
<dbReference type="InterPro" id="IPR012820">
    <property type="entry name" value="Sucrose_synthase_pln/cyn"/>
</dbReference>
<dbReference type="InterPro" id="IPR056736">
    <property type="entry name" value="SUS_EPBD"/>
</dbReference>
<dbReference type="InterPro" id="IPR056735">
    <property type="entry name" value="SUS_N"/>
</dbReference>
<dbReference type="NCBIfam" id="TIGR02470">
    <property type="entry name" value="sucr_synth"/>
    <property type="match status" value="1"/>
</dbReference>
<dbReference type="PANTHER" id="PTHR45839">
    <property type="match status" value="1"/>
</dbReference>
<dbReference type="PANTHER" id="PTHR45839:SF7">
    <property type="entry name" value="SUCROSE SYNTHASE 1"/>
    <property type="match status" value="1"/>
</dbReference>
<dbReference type="Pfam" id="PF00534">
    <property type="entry name" value="Glycos_transf_1"/>
    <property type="match status" value="1"/>
</dbReference>
<dbReference type="Pfam" id="PF00862">
    <property type="entry name" value="GT-B_Sucrose_synth"/>
    <property type="match status" value="1"/>
</dbReference>
<dbReference type="Pfam" id="PF24862">
    <property type="entry name" value="SUS_EPBD"/>
    <property type="match status" value="1"/>
</dbReference>
<dbReference type="Pfam" id="PF24861">
    <property type="entry name" value="SUS_N"/>
    <property type="match status" value="1"/>
</dbReference>
<dbReference type="SUPFAM" id="SSF53756">
    <property type="entry name" value="UDP-Glycosyltransferase/glycogen phosphorylase"/>
    <property type="match status" value="1"/>
</dbReference>
<name>SUS1_HORVU</name>
<reference key="1">
    <citation type="journal article" date="1992" name="FEBS Lett.">
        <title>Homologous sucrose synthase genes in barley (Hordeum vulgare) are located in chromosomes 7H (syn. 1) and 2H. Evidence for a gene translocation?</title>
        <authorList>
            <person name="Sanchez de la Hoz P."/>
            <person name="Vicente-Carbajosa J."/>
            <person name="Mena M."/>
            <person name="Carbonero P."/>
        </authorList>
    </citation>
    <scope>NUCLEOTIDE SEQUENCE [MRNA]</scope>
    <source>
        <strain>cv. Abyssinian 2231</strain>
        <tissue>Endosperm</tissue>
    </source>
</reference>
<reference key="2">
    <citation type="submission" date="1992-06" db="EMBL/GenBank/DDBJ databases">
        <authorList>
            <person name="Brandt J."/>
            <person name="Thordal-Christensen H."/>
            <person name="Collinge D.B."/>
        </authorList>
    </citation>
    <scope>NUCLEOTIDE SEQUENCE [MRNA] OF 223-807</scope>
    <source>
        <strain>cv. Pallas</strain>
    </source>
</reference>
<reference key="3">
    <citation type="journal article" date="1997" name="Plant Physiol.">
        <title>The spatial distribution of sucrose synthase isozymes in barley.</title>
        <authorList>
            <person name="Guerin J."/>
            <person name="Carbonero P."/>
        </authorList>
    </citation>
    <scope>BIOPHYSICOCHEMICAL PROPERTIES</scope>
    <scope>SUBUNIT</scope>
    <scope>TISSUE SPECIFICITY</scope>
</reference>
<reference key="4">
    <citation type="journal article" date="2003" name="Plant Cell Physiol.">
        <title>Sucrose synthase catalyzes the de novo production of ADPglucose linked to starch biosynthesis in heterotrophic tissues of plants.</title>
        <authorList>
            <person name="Baroja-Fernandez E."/>
            <person name="Munoz F.J."/>
            <person name="Saikusa T."/>
            <person name="Rodriguez-Lopez M."/>
            <person name="Akazawa T."/>
            <person name="Pozueta-Romero J."/>
        </authorList>
    </citation>
    <scope>FUNCTION</scope>
    <scope>CATALYTIC ACTIVITY</scope>
    <scope>DEVELOPMENTAL STAGE</scope>
</reference>
<comment type="function">
    <text evidence="3">Sucrose-cleaving enzyme that provides UDP-glucose and fructose for various metabolic pathways.</text>
</comment>
<comment type="catalytic activity">
    <reaction evidence="3">
        <text>an NDP-alpha-D-glucose + D-fructose = a ribonucleoside 5'-diphosphate + sucrose + H(+)</text>
        <dbReference type="Rhea" id="RHEA:16241"/>
        <dbReference type="ChEBI" id="CHEBI:15378"/>
        <dbReference type="ChEBI" id="CHEBI:17992"/>
        <dbReference type="ChEBI" id="CHEBI:37721"/>
        <dbReference type="ChEBI" id="CHEBI:57930"/>
        <dbReference type="ChEBI" id="CHEBI:76533"/>
        <dbReference type="EC" id="2.4.1.13"/>
    </reaction>
</comment>
<comment type="biophysicochemical properties">
    <kinetics>
        <KM evidence="2">30 mM for Sucrose</KM>
        <KM evidence="2">5 uM for UDP</KM>
    </kinetics>
</comment>
<comment type="subunit">
    <text evidence="2">Forms homotetramers. In endosperm it forms both homotetramers and heterotetramers with SS2, all three possible heterotetramers are formed.</text>
</comment>
<comment type="tissue specificity">
    <text evidence="2">Highly expressed in developing endosperm and in roots and, at lower levels, in coleoptiles and aleurone. In 3 day old roots it is detected in cap cells and along the vascular strand, starting just after the meristemic region. In 9 day old leaves it is found in the phloem. In seeds it is distributed throughout the endosperm and also found in the assimilate-unloading tissues, the nucellar projection, the vascular area and at a high concentration in the chalazal region.</text>
</comment>
<comment type="developmental stage">
    <text evidence="3">Activity increases as seeds develop.</text>
</comment>
<comment type="similarity">
    <text evidence="4">Belongs to the glycosyltransferase 1 family. Plant sucrose synthase subfamily.</text>
</comment>
<gene>
    <name type="primary">SS1</name>
</gene>
<sequence length="807" mass="92211">MAAKLTRLHSLRERLGATFSSHPNELIALFSRYVHQGKGMLQRHQLLAEFDALFESDKEKYAPFEDILRAAQEAIVLPPWVALAIRPRTGVWDYIRVNVSELAVEELTVSEYLAFKEQLVDEHASRKFVLELDFEPFNASFPRPSMSKSYGKGVQFLNRHLSSKLFQDKESLYPLLNFLKAHNYKGTTMILNDRIQSLRGLQSALRKAEEYLVSIPEDTPSSEFNHRFQELGLEKGWGDTAKRVHDTIHLLLDLLEAPDPASLEKFLGTIPMMFNVVILSPHGYFAQSNVLGYPDTGGQVVYILDQVRALENEMLLRIKQQGLDITPKILIVTRLLPDAVGTTCGQRLEKVIGTEHTDILRVPFRTENGIRKWISRFDVWPYLETYTEDVANELMREMQTKPDLIIGNYSDGNLVATLLAHKLGVTQCTIAHALEKTKYPNSDIYLDKFDSQYHFSCQFTADLIAMNHTDFIITSTFQEIAGSKDSVGQYESHIAFTLPDLYRVVHGIDVFDPKFNIVSPGADMTVYFPYTETDKRLTAFHSEIEELLYSDVENDEHKFVLKDRNKPIIFSMARLDRVKNMTGLVEMYGKNAHLKDLANLVIVAGDHGKESKDREEQAEFKRMYSLIEEYKLKGHIRWISAQMNRVRNGELYRYICDTKGAFVQPAFYEAFGLTVIEAMTCGLPTIATCHGGPAEIIVDGVSGLHIDPYHSDKAADILVNFFEKSTADPSYWDKISQGGLKRIYEKYTWKLYSERLMTLTGVYGFWKYVSNLERRETRRYLEMFYALKYRSLAAAVPLAVDGESSGN</sequence>
<protein>
    <recommendedName>
        <fullName>Sucrose synthase 1</fullName>
        <ecNumber>2.4.1.13</ecNumber>
    </recommendedName>
    <alternativeName>
        <fullName>Sucrose-UDP glucosyltransferase 1</fullName>
    </alternativeName>
</protein>
<feature type="chain" id="PRO_0000204649" description="Sucrose synthase 1">
    <location>
        <begin position="1"/>
        <end position="807"/>
    </location>
</feature>
<feature type="region of interest" description="GT-B glycosyltransferase" evidence="1">
    <location>
        <begin position="272"/>
        <end position="748"/>
    </location>
</feature>
<feature type="sequence conflict" description="In Ref. 2; CAA47264." evidence="4" ref="2">
    <original>I</original>
    <variation>IL</variation>
    <location>
        <position position="370"/>
    </location>
</feature>
<feature type="sequence conflict" description="In Ref. 2; CAA47264." evidence="4" ref="2">
    <original>I</original>
    <variation>Y</variation>
    <location>
        <position position="374"/>
    </location>
</feature>
<feature type="sequence conflict" description="In Ref. 2; CAA47264." evidence="4" ref="2">
    <original>NE</original>
    <variation>KQ</variation>
    <location>
        <begin position="392"/>
        <end position="393"/>
    </location>
</feature>
<accession>P31922</accession>
<proteinExistence type="evidence at protein level"/>
<evidence type="ECO:0000250" key="1">
    <source>
        <dbReference type="UniProtKB" id="P49040"/>
    </source>
</evidence>
<evidence type="ECO:0000269" key="2">
    <source>
    </source>
</evidence>
<evidence type="ECO:0000269" key="3">
    <source>
    </source>
</evidence>
<evidence type="ECO:0000305" key="4"/>